<keyword id="KW-1185">Reference proteome</keyword>
<keyword id="KW-0687">Ribonucleoprotein</keyword>
<keyword id="KW-0689">Ribosomal protein</keyword>
<feature type="chain" id="PRO_1000144114" description="Large ribosomal subunit protein uL13">
    <location>
        <begin position="1"/>
        <end position="151"/>
    </location>
</feature>
<feature type="region of interest" description="Disordered" evidence="2">
    <location>
        <begin position="129"/>
        <end position="151"/>
    </location>
</feature>
<sequence length="151" mass="16884">MEKTTLPNLETLDKQWYVIDAAGQRLGRLASEIAMILRGKNKPTYTPHLDTGDFVIVINAEKVIVTGKKSQQKVYHRHSGRPGGMKVETFEKLQARLPERIVEKAVKGMLPKNSLGRQLFTKLKVYSGSNHPHQAQKPETLTINTIPGGNN</sequence>
<protein>
    <recommendedName>
        <fullName evidence="1">Large ribosomal subunit protein uL13</fullName>
    </recommendedName>
    <alternativeName>
        <fullName evidence="3">50S ribosomal protein L13</fullName>
    </alternativeName>
</protein>
<gene>
    <name evidence="1" type="primary">rplM</name>
    <name evidence="1" type="synonym">rpl13</name>
    <name type="ordered locus">PCC7424_3730</name>
</gene>
<accession>B7KI14</accession>
<comment type="function">
    <text evidence="1">This protein is one of the early assembly proteins of the 50S ribosomal subunit, although it is not seen to bind rRNA by itself. It is important during the early stages of 50S assembly.</text>
</comment>
<comment type="subunit">
    <text evidence="1">Part of the 50S ribosomal subunit.</text>
</comment>
<comment type="similarity">
    <text evidence="1">Belongs to the universal ribosomal protein uL13 family.</text>
</comment>
<dbReference type="EMBL" id="CP001291">
    <property type="protein sequence ID" value="ACK72111.1"/>
    <property type="molecule type" value="Genomic_DNA"/>
</dbReference>
<dbReference type="RefSeq" id="WP_015955703.1">
    <property type="nucleotide sequence ID" value="NC_011729.1"/>
</dbReference>
<dbReference type="SMR" id="B7KI14"/>
<dbReference type="STRING" id="65393.PCC7424_3730"/>
<dbReference type="KEGG" id="cyc:PCC7424_3730"/>
<dbReference type="eggNOG" id="COG0102">
    <property type="taxonomic scope" value="Bacteria"/>
</dbReference>
<dbReference type="HOGENOM" id="CLU_082184_2_2_3"/>
<dbReference type="OrthoDB" id="9801330at2"/>
<dbReference type="Proteomes" id="UP000002384">
    <property type="component" value="Chromosome"/>
</dbReference>
<dbReference type="GO" id="GO:0022625">
    <property type="term" value="C:cytosolic large ribosomal subunit"/>
    <property type="evidence" value="ECO:0007669"/>
    <property type="project" value="TreeGrafter"/>
</dbReference>
<dbReference type="GO" id="GO:0003729">
    <property type="term" value="F:mRNA binding"/>
    <property type="evidence" value="ECO:0007669"/>
    <property type="project" value="TreeGrafter"/>
</dbReference>
<dbReference type="GO" id="GO:0003735">
    <property type="term" value="F:structural constituent of ribosome"/>
    <property type="evidence" value="ECO:0007669"/>
    <property type="project" value="InterPro"/>
</dbReference>
<dbReference type="GO" id="GO:0017148">
    <property type="term" value="P:negative regulation of translation"/>
    <property type="evidence" value="ECO:0007669"/>
    <property type="project" value="TreeGrafter"/>
</dbReference>
<dbReference type="GO" id="GO:0006412">
    <property type="term" value="P:translation"/>
    <property type="evidence" value="ECO:0007669"/>
    <property type="project" value="UniProtKB-UniRule"/>
</dbReference>
<dbReference type="CDD" id="cd00392">
    <property type="entry name" value="Ribosomal_L13"/>
    <property type="match status" value="1"/>
</dbReference>
<dbReference type="FunFam" id="3.90.1180.10:FF:000001">
    <property type="entry name" value="50S ribosomal protein L13"/>
    <property type="match status" value="1"/>
</dbReference>
<dbReference type="Gene3D" id="3.90.1180.10">
    <property type="entry name" value="Ribosomal protein L13"/>
    <property type="match status" value="1"/>
</dbReference>
<dbReference type="HAMAP" id="MF_01366">
    <property type="entry name" value="Ribosomal_uL13"/>
    <property type="match status" value="1"/>
</dbReference>
<dbReference type="InterPro" id="IPR005822">
    <property type="entry name" value="Ribosomal_uL13"/>
</dbReference>
<dbReference type="InterPro" id="IPR005823">
    <property type="entry name" value="Ribosomal_uL13_bac-type"/>
</dbReference>
<dbReference type="InterPro" id="IPR023563">
    <property type="entry name" value="Ribosomal_uL13_CS"/>
</dbReference>
<dbReference type="InterPro" id="IPR036899">
    <property type="entry name" value="Ribosomal_uL13_sf"/>
</dbReference>
<dbReference type="NCBIfam" id="TIGR01066">
    <property type="entry name" value="rplM_bact"/>
    <property type="match status" value="1"/>
</dbReference>
<dbReference type="PANTHER" id="PTHR11545:SF2">
    <property type="entry name" value="LARGE RIBOSOMAL SUBUNIT PROTEIN UL13M"/>
    <property type="match status" value="1"/>
</dbReference>
<dbReference type="PANTHER" id="PTHR11545">
    <property type="entry name" value="RIBOSOMAL PROTEIN L13"/>
    <property type="match status" value="1"/>
</dbReference>
<dbReference type="Pfam" id="PF00572">
    <property type="entry name" value="Ribosomal_L13"/>
    <property type="match status" value="1"/>
</dbReference>
<dbReference type="PIRSF" id="PIRSF002181">
    <property type="entry name" value="Ribosomal_L13"/>
    <property type="match status" value="1"/>
</dbReference>
<dbReference type="SUPFAM" id="SSF52161">
    <property type="entry name" value="Ribosomal protein L13"/>
    <property type="match status" value="1"/>
</dbReference>
<dbReference type="PROSITE" id="PS00783">
    <property type="entry name" value="RIBOSOMAL_L13"/>
    <property type="match status" value="1"/>
</dbReference>
<proteinExistence type="inferred from homology"/>
<reference key="1">
    <citation type="journal article" date="2011" name="MBio">
        <title>Novel metabolic attributes of the genus Cyanothece, comprising a group of unicellular nitrogen-fixing Cyanobacteria.</title>
        <authorList>
            <person name="Bandyopadhyay A."/>
            <person name="Elvitigala T."/>
            <person name="Welsh E."/>
            <person name="Stockel J."/>
            <person name="Liberton M."/>
            <person name="Min H."/>
            <person name="Sherman L.A."/>
            <person name="Pakrasi H.B."/>
        </authorList>
    </citation>
    <scope>NUCLEOTIDE SEQUENCE [LARGE SCALE GENOMIC DNA]</scope>
    <source>
        <strain>PCC 7424</strain>
    </source>
</reference>
<name>RL13_GLOC7</name>
<organism>
    <name type="scientific">Gloeothece citriformis (strain PCC 7424)</name>
    <name type="common">Cyanothece sp. (strain PCC 7424)</name>
    <dbReference type="NCBI Taxonomy" id="65393"/>
    <lineage>
        <taxon>Bacteria</taxon>
        <taxon>Bacillati</taxon>
        <taxon>Cyanobacteriota</taxon>
        <taxon>Cyanophyceae</taxon>
        <taxon>Oscillatoriophycideae</taxon>
        <taxon>Chroococcales</taxon>
        <taxon>Aphanothecaceae</taxon>
        <taxon>Gloeothece</taxon>
        <taxon>Gloeothece citriformis</taxon>
    </lineage>
</organism>
<evidence type="ECO:0000255" key="1">
    <source>
        <dbReference type="HAMAP-Rule" id="MF_01366"/>
    </source>
</evidence>
<evidence type="ECO:0000256" key="2">
    <source>
        <dbReference type="SAM" id="MobiDB-lite"/>
    </source>
</evidence>
<evidence type="ECO:0000305" key="3"/>